<dbReference type="EC" id="6.2.1.-"/>
<dbReference type="EMBL" id="CR352243">
    <property type="protein sequence ID" value="CAI21316.1"/>
    <property type="molecule type" value="Genomic_DNA"/>
</dbReference>
<dbReference type="SMR" id="Q5RG49"/>
<dbReference type="FunCoup" id="Q5RG49">
    <property type="interactions" value="848"/>
</dbReference>
<dbReference type="STRING" id="7955.ENSDARP00000118390"/>
<dbReference type="PaxDb" id="7955-ENSDARP00000118390"/>
<dbReference type="AGR" id="ZFIN:ZDB-GENE-041210-322"/>
<dbReference type="ZFIN" id="ZDB-GENE-041210-322">
    <property type="gene designation" value="aasdh"/>
</dbReference>
<dbReference type="eggNOG" id="KOG1178">
    <property type="taxonomic scope" value="Eukaryota"/>
</dbReference>
<dbReference type="eggNOG" id="KOG4649">
    <property type="taxonomic scope" value="Eukaryota"/>
</dbReference>
<dbReference type="InParanoid" id="Q5RG49"/>
<dbReference type="PhylomeDB" id="Q5RG49"/>
<dbReference type="TreeFam" id="TF314245"/>
<dbReference type="PRO" id="PR:Q5RG49"/>
<dbReference type="Proteomes" id="UP000000437">
    <property type="component" value="Unplaced"/>
</dbReference>
<dbReference type="GO" id="GO:0016878">
    <property type="term" value="F:acid-thiol ligase activity"/>
    <property type="evidence" value="ECO:0000250"/>
    <property type="project" value="UniProtKB"/>
</dbReference>
<dbReference type="GO" id="GO:0005524">
    <property type="term" value="F:ATP binding"/>
    <property type="evidence" value="ECO:0007669"/>
    <property type="project" value="UniProtKB-KW"/>
</dbReference>
<dbReference type="GO" id="GO:0043041">
    <property type="term" value="P:amino acid activation for nonribosomal peptide biosynthetic process"/>
    <property type="evidence" value="ECO:0000318"/>
    <property type="project" value="GO_Central"/>
</dbReference>
<dbReference type="GO" id="GO:0006631">
    <property type="term" value="P:fatty acid metabolic process"/>
    <property type="evidence" value="ECO:0000250"/>
    <property type="project" value="UniProtKB"/>
</dbReference>
<dbReference type="CDD" id="cd17654">
    <property type="entry name" value="A_NRPS_acs4"/>
    <property type="match status" value="1"/>
</dbReference>
<dbReference type="FunFam" id="3.40.50.12780:FF:000027">
    <property type="entry name" value="AASDH isoform 4"/>
    <property type="match status" value="1"/>
</dbReference>
<dbReference type="Gene3D" id="2.40.128.630">
    <property type="match status" value="1"/>
</dbReference>
<dbReference type="Gene3D" id="3.30.300.30">
    <property type="match status" value="1"/>
</dbReference>
<dbReference type="Gene3D" id="3.40.50.12780">
    <property type="entry name" value="N-terminal domain of ligase-like"/>
    <property type="match status" value="1"/>
</dbReference>
<dbReference type="Gene3D" id="2.130.10.10">
    <property type="entry name" value="YVTN repeat-like/Quinoprotein amine dehydrogenase"/>
    <property type="match status" value="3"/>
</dbReference>
<dbReference type="InterPro" id="IPR048005">
    <property type="entry name" value="AASDH_AMP"/>
</dbReference>
<dbReference type="InterPro" id="IPR045851">
    <property type="entry name" value="AMP-bd_C_sf"/>
</dbReference>
<dbReference type="InterPro" id="IPR020845">
    <property type="entry name" value="AMP-binding_CS"/>
</dbReference>
<dbReference type="InterPro" id="IPR000873">
    <property type="entry name" value="AMP-dep_synth/lig_dom"/>
</dbReference>
<dbReference type="InterPro" id="IPR042099">
    <property type="entry name" value="ANL_N_sf"/>
</dbReference>
<dbReference type="InterPro" id="IPR052091">
    <property type="entry name" value="Beta-ala_Activ/Resist"/>
</dbReference>
<dbReference type="InterPro" id="IPR009081">
    <property type="entry name" value="PP-bd_ACP"/>
</dbReference>
<dbReference type="InterPro" id="IPR018391">
    <property type="entry name" value="PQQ_b-propeller_rpt"/>
</dbReference>
<dbReference type="InterPro" id="IPR002372">
    <property type="entry name" value="PQQ_rpt_dom"/>
</dbReference>
<dbReference type="InterPro" id="IPR011047">
    <property type="entry name" value="Quinoprotein_ADH-like_sf"/>
</dbReference>
<dbReference type="InterPro" id="IPR015943">
    <property type="entry name" value="WD40/YVTN_repeat-like_dom_sf"/>
</dbReference>
<dbReference type="PANTHER" id="PTHR44394">
    <property type="entry name" value="BETA-ALANINE-ACTIVATING ENZYME"/>
    <property type="match status" value="1"/>
</dbReference>
<dbReference type="PANTHER" id="PTHR44394:SF1">
    <property type="entry name" value="BETA-ALANINE-ACTIVATING ENZYME"/>
    <property type="match status" value="1"/>
</dbReference>
<dbReference type="Pfam" id="PF00501">
    <property type="entry name" value="AMP-binding"/>
    <property type="match status" value="1"/>
</dbReference>
<dbReference type="Pfam" id="PF13570">
    <property type="entry name" value="Beta-prop_ACSF4"/>
    <property type="match status" value="1"/>
</dbReference>
<dbReference type="SMART" id="SM00564">
    <property type="entry name" value="PQQ"/>
    <property type="match status" value="7"/>
</dbReference>
<dbReference type="SUPFAM" id="SSF56801">
    <property type="entry name" value="Acetyl-CoA synthetase-like"/>
    <property type="match status" value="1"/>
</dbReference>
<dbReference type="SUPFAM" id="SSF50998">
    <property type="entry name" value="Quinoprotein alcohol dehydrogenase-like"/>
    <property type="match status" value="1"/>
</dbReference>
<dbReference type="PROSITE" id="PS00455">
    <property type="entry name" value="AMP_BINDING"/>
    <property type="match status" value="1"/>
</dbReference>
<dbReference type="PROSITE" id="PS50075">
    <property type="entry name" value="CARRIER"/>
    <property type="match status" value="1"/>
</dbReference>
<comment type="function">
    <text evidence="2">Covalently binds beta-alanine in an ATP-dependent manner to form a thioester bond with its phosphopantetheine group and transfers it to an, as yet, unknown acceptor. May be required for a post-translational protein modification or for post-transcriptional modification of an RNA.</text>
</comment>
<comment type="similarity">
    <text evidence="5">Belongs to the ATP-dependent AMP-binding enzyme family.</text>
</comment>
<feature type="chain" id="PRO_0000315805" description="Beta-alanine-activating enzyme">
    <location>
        <begin position="1"/>
        <end position="1149"/>
    </location>
</feature>
<feature type="domain" description="Carrier" evidence="3">
    <location>
        <begin position="570"/>
        <end position="646"/>
    </location>
</feature>
<feature type="region of interest" description="Disordered" evidence="4">
    <location>
        <begin position="653"/>
        <end position="683"/>
    </location>
</feature>
<feature type="binding site" evidence="1">
    <location>
        <begin position="178"/>
        <end position="186"/>
    </location>
    <ligand>
        <name>ATP</name>
        <dbReference type="ChEBI" id="CHEBI:30616"/>
    </ligand>
</feature>
<feature type="binding site" evidence="1">
    <location>
        <position position="408"/>
    </location>
    <ligand>
        <name>ATP</name>
        <dbReference type="ChEBI" id="CHEBI:30616"/>
    </ligand>
</feature>
<feature type="binding site" evidence="1">
    <location>
        <position position="422"/>
    </location>
    <ligand>
        <name>ATP</name>
        <dbReference type="ChEBI" id="CHEBI:30616"/>
    </ligand>
</feature>
<feature type="binding site" evidence="1">
    <location>
        <position position="543"/>
    </location>
    <ligand>
        <name>ATP</name>
        <dbReference type="ChEBI" id="CHEBI:30616"/>
    </ligand>
</feature>
<feature type="modified residue" description="O-(pantetheine 4'-phosphoryl)serine" evidence="3">
    <location>
        <position position="605"/>
    </location>
</feature>
<reference key="1">
    <citation type="journal article" date="2013" name="Nature">
        <title>The zebrafish reference genome sequence and its relationship to the human genome.</title>
        <authorList>
            <person name="Howe K."/>
            <person name="Clark M.D."/>
            <person name="Torroja C.F."/>
            <person name="Torrance J."/>
            <person name="Berthelot C."/>
            <person name="Muffato M."/>
            <person name="Collins J.E."/>
            <person name="Humphray S."/>
            <person name="McLaren K."/>
            <person name="Matthews L."/>
            <person name="McLaren S."/>
            <person name="Sealy I."/>
            <person name="Caccamo M."/>
            <person name="Churcher C."/>
            <person name="Scott C."/>
            <person name="Barrett J.C."/>
            <person name="Koch R."/>
            <person name="Rauch G.J."/>
            <person name="White S."/>
            <person name="Chow W."/>
            <person name="Kilian B."/>
            <person name="Quintais L.T."/>
            <person name="Guerra-Assuncao J.A."/>
            <person name="Zhou Y."/>
            <person name="Gu Y."/>
            <person name="Yen J."/>
            <person name="Vogel J.H."/>
            <person name="Eyre T."/>
            <person name="Redmond S."/>
            <person name="Banerjee R."/>
            <person name="Chi J."/>
            <person name="Fu B."/>
            <person name="Langley E."/>
            <person name="Maguire S.F."/>
            <person name="Laird G.K."/>
            <person name="Lloyd D."/>
            <person name="Kenyon E."/>
            <person name="Donaldson S."/>
            <person name="Sehra H."/>
            <person name="Almeida-King J."/>
            <person name="Loveland J."/>
            <person name="Trevanion S."/>
            <person name="Jones M."/>
            <person name="Quail M."/>
            <person name="Willey D."/>
            <person name="Hunt A."/>
            <person name="Burton J."/>
            <person name="Sims S."/>
            <person name="McLay K."/>
            <person name="Plumb B."/>
            <person name="Davis J."/>
            <person name="Clee C."/>
            <person name="Oliver K."/>
            <person name="Clark R."/>
            <person name="Riddle C."/>
            <person name="Elliot D."/>
            <person name="Threadgold G."/>
            <person name="Harden G."/>
            <person name="Ware D."/>
            <person name="Begum S."/>
            <person name="Mortimore B."/>
            <person name="Kerry G."/>
            <person name="Heath P."/>
            <person name="Phillimore B."/>
            <person name="Tracey A."/>
            <person name="Corby N."/>
            <person name="Dunn M."/>
            <person name="Johnson C."/>
            <person name="Wood J."/>
            <person name="Clark S."/>
            <person name="Pelan S."/>
            <person name="Griffiths G."/>
            <person name="Smith M."/>
            <person name="Glithero R."/>
            <person name="Howden P."/>
            <person name="Barker N."/>
            <person name="Lloyd C."/>
            <person name="Stevens C."/>
            <person name="Harley J."/>
            <person name="Holt K."/>
            <person name="Panagiotidis G."/>
            <person name="Lovell J."/>
            <person name="Beasley H."/>
            <person name="Henderson C."/>
            <person name="Gordon D."/>
            <person name="Auger K."/>
            <person name="Wright D."/>
            <person name="Collins J."/>
            <person name="Raisen C."/>
            <person name="Dyer L."/>
            <person name="Leung K."/>
            <person name="Robertson L."/>
            <person name="Ambridge K."/>
            <person name="Leongamornlert D."/>
            <person name="McGuire S."/>
            <person name="Gilderthorp R."/>
            <person name="Griffiths C."/>
            <person name="Manthravadi D."/>
            <person name="Nichol S."/>
            <person name="Barker G."/>
            <person name="Whitehead S."/>
            <person name="Kay M."/>
            <person name="Brown J."/>
            <person name="Murnane C."/>
            <person name="Gray E."/>
            <person name="Humphries M."/>
            <person name="Sycamore N."/>
            <person name="Barker D."/>
            <person name="Saunders D."/>
            <person name="Wallis J."/>
            <person name="Babbage A."/>
            <person name="Hammond S."/>
            <person name="Mashreghi-Mohammadi M."/>
            <person name="Barr L."/>
            <person name="Martin S."/>
            <person name="Wray P."/>
            <person name="Ellington A."/>
            <person name="Matthews N."/>
            <person name="Ellwood M."/>
            <person name="Woodmansey R."/>
            <person name="Clark G."/>
            <person name="Cooper J."/>
            <person name="Tromans A."/>
            <person name="Grafham D."/>
            <person name="Skuce C."/>
            <person name="Pandian R."/>
            <person name="Andrews R."/>
            <person name="Harrison E."/>
            <person name="Kimberley A."/>
            <person name="Garnett J."/>
            <person name="Fosker N."/>
            <person name="Hall R."/>
            <person name="Garner P."/>
            <person name="Kelly D."/>
            <person name="Bird C."/>
            <person name="Palmer S."/>
            <person name="Gehring I."/>
            <person name="Berger A."/>
            <person name="Dooley C.M."/>
            <person name="Ersan-Urun Z."/>
            <person name="Eser C."/>
            <person name="Geiger H."/>
            <person name="Geisler M."/>
            <person name="Karotki L."/>
            <person name="Kirn A."/>
            <person name="Konantz J."/>
            <person name="Konantz M."/>
            <person name="Oberlander M."/>
            <person name="Rudolph-Geiger S."/>
            <person name="Teucke M."/>
            <person name="Lanz C."/>
            <person name="Raddatz G."/>
            <person name="Osoegawa K."/>
            <person name="Zhu B."/>
            <person name="Rapp A."/>
            <person name="Widaa S."/>
            <person name="Langford C."/>
            <person name="Yang F."/>
            <person name="Schuster S.C."/>
            <person name="Carter N.P."/>
            <person name="Harrow J."/>
            <person name="Ning Z."/>
            <person name="Herrero J."/>
            <person name="Searle S.M."/>
            <person name="Enright A."/>
            <person name="Geisler R."/>
            <person name="Plasterk R.H."/>
            <person name="Lee C."/>
            <person name="Westerfield M."/>
            <person name="de Jong P.J."/>
            <person name="Zon L.I."/>
            <person name="Postlethwait J.H."/>
            <person name="Nusslein-Volhard C."/>
            <person name="Hubbard T.J."/>
            <person name="Roest Crollius H."/>
            <person name="Rogers J."/>
            <person name="Stemple D.L."/>
        </authorList>
    </citation>
    <scope>NUCLEOTIDE SEQUENCE [LARGE SCALE GENOMIC DNA]</scope>
    <source>
        <strain>Tuebingen</strain>
    </source>
</reference>
<gene>
    <name type="primary">aasdh</name>
    <name type="synonym">acsf4</name>
    <name type="ORF">si:dkeyp-117h8.3</name>
</gene>
<evidence type="ECO:0000250" key="1"/>
<evidence type="ECO:0000250" key="2">
    <source>
        <dbReference type="UniProtKB" id="Q80WC9"/>
    </source>
</evidence>
<evidence type="ECO:0000255" key="3">
    <source>
        <dbReference type="PROSITE-ProRule" id="PRU00258"/>
    </source>
</evidence>
<evidence type="ECO:0000256" key="4">
    <source>
        <dbReference type="SAM" id="MobiDB-lite"/>
    </source>
</evidence>
<evidence type="ECO:0000305" key="5"/>
<keyword id="KW-0067">ATP-binding</keyword>
<keyword id="KW-0276">Fatty acid metabolism</keyword>
<keyword id="KW-0436">Ligase</keyword>
<keyword id="KW-0443">Lipid metabolism</keyword>
<keyword id="KW-0547">Nucleotide-binding</keyword>
<keyword id="KW-0596">Phosphopantetheine</keyword>
<keyword id="KW-0597">Phosphoprotein</keyword>
<keyword id="KW-1185">Reference proteome</keyword>
<protein>
    <recommendedName>
        <fullName evidence="2">Beta-alanine-activating enzyme</fullName>
        <ecNumber>6.2.1.-</ecNumber>
    </recommendedName>
    <alternativeName>
        <fullName>Acyl-CoA synthetase family member 4</fullName>
    </alternativeName>
</protein>
<name>ACSF4_DANRE</name>
<sequence>MTAKLLYELVHEAARAHGDKRAVAFDSSIAARVSLTYDELIFMSDELTAQLRVSVQNHEGAIGLFCHPDVLLPVWIIGILQFPAAYLPLDPASPPQCSLRMINNCRLSFCLIQNELLHSAFSILISVEVCATFCSHRLTLIKIKSEQKENSQANDAPFSSAVTKNIQQGEPLAYILHTSGTTGLPKIVKVPHRCIVPNIIHLRSVFKMTPEDVVFLSSPLTFDPSVVEVFLALSSGACLLIVPSAVKKMPRRLAHVLFKRNTTTVLQATPTLVRRFGKVVLQEEVLSADSSLRILAFGGEPCPSLNLVKSWRQEGNRTHIYNLYGTTEVSCWASWYKVPDEHLCLEDITDAPVPLGEPMLDTVMEVRDETGHLVTEGEGQLFIGGQNRVCLLDDEETVVKGTMRATGDWVQVQNSNLYFLGRKDRLVKRFGQRVHLDALQQMIESFSGVEACAVNLSKDDRLLAFIVLTSGHAGAPLSSEIHHDKHLTQPSEISVSVSPKASPPSLRVTEGEIRHQLSKRLSSHSIPDMMVFIPALPLTSHGKIAIDELMKTCETQRQDKNKQAPQKDTASVRLKLQNLWKECLGLQDDVVVEENAHFMFSGGDSLQALRLFDDITVAMGTTSVGLLEVILDGSFSDLLSHIMTETHDDAVLPSKKRTADYSDSEASGKRQHKEMTTSSDTESPFVVPSLRRTMGFVVVRRAAEVFKWGFQKIPQGIFSDAPDKNYVTNNSVGNDTGLISNPSLELSKSSAVTNMADHLQAQEETLLASESPSSHGGVREDSTGVLPLALRVLWRSDTGRCVDASPMLLVAPDRTTVFIGSHSHRLQALDLSRGEVIWERILGDRLESSAAISSCGGLVAIGCYDRQMYFLDVSCGDTVWTFETGDVVKSSPTVDPKTGLVFAGSHDGHVYALNPLTKTCTWQHYCGGGAVFSSPCVHLSPRQLYCSSLGGHLHCLNPDSGKVLWKYSSSAPFFSSPHCSDSSVFIGSVNGHIIGISHSGNTLWDFSTDGPVFSSPCISSLTLLTNQPPSTTPSSSVTTSPNHIVTCGSHDGHVYCLNAQNGSLLWQFQTTGKVFSTPFVFSGALWGLRTLAAVCSTDGKVWVLDGETGIQKATLSLPGELFSSPVIWGSKLVVGCRNDYVYCLELTTQ</sequence>
<organism>
    <name type="scientific">Danio rerio</name>
    <name type="common">Zebrafish</name>
    <name type="synonym">Brachydanio rerio</name>
    <dbReference type="NCBI Taxonomy" id="7955"/>
    <lineage>
        <taxon>Eukaryota</taxon>
        <taxon>Metazoa</taxon>
        <taxon>Chordata</taxon>
        <taxon>Craniata</taxon>
        <taxon>Vertebrata</taxon>
        <taxon>Euteleostomi</taxon>
        <taxon>Actinopterygii</taxon>
        <taxon>Neopterygii</taxon>
        <taxon>Teleostei</taxon>
        <taxon>Ostariophysi</taxon>
        <taxon>Cypriniformes</taxon>
        <taxon>Danionidae</taxon>
        <taxon>Danioninae</taxon>
        <taxon>Danio</taxon>
    </lineage>
</organism>
<accession>Q5RG49</accession>
<proteinExistence type="inferred from homology"/>